<proteinExistence type="evidence at transcript level"/>
<organism>
    <name type="scientific">Mus musculus</name>
    <name type="common">Mouse</name>
    <dbReference type="NCBI Taxonomy" id="10090"/>
    <lineage>
        <taxon>Eukaryota</taxon>
        <taxon>Metazoa</taxon>
        <taxon>Chordata</taxon>
        <taxon>Craniata</taxon>
        <taxon>Vertebrata</taxon>
        <taxon>Euteleostomi</taxon>
        <taxon>Mammalia</taxon>
        <taxon>Eutheria</taxon>
        <taxon>Euarchontoglires</taxon>
        <taxon>Glires</taxon>
        <taxon>Rodentia</taxon>
        <taxon>Myomorpha</taxon>
        <taxon>Muroidea</taxon>
        <taxon>Muridae</taxon>
        <taxon>Murinae</taxon>
        <taxon>Mus</taxon>
        <taxon>Mus</taxon>
    </lineage>
</organism>
<keyword id="KW-0217">Developmental protein</keyword>
<keyword id="KW-0238">DNA-binding</keyword>
<keyword id="KW-0371">Homeobox</keyword>
<keyword id="KW-0539">Nucleus</keyword>
<keyword id="KW-1185">Reference proteome</keyword>
<keyword id="KW-0804">Transcription</keyword>
<keyword id="KW-0805">Transcription regulation</keyword>
<evidence type="ECO:0000255" key="1">
    <source>
        <dbReference type="PROSITE-ProRule" id="PRU00108"/>
    </source>
</evidence>
<evidence type="ECO:0000256" key="2">
    <source>
        <dbReference type="SAM" id="MobiDB-lite"/>
    </source>
</evidence>
<evidence type="ECO:0000269" key="3">
    <source>
    </source>
</evidence>
<evidence type="ECO:0000269" key="4">
    <source>
    </source>
</evidence>
<evidence type="ECO:0000305" key="5"/>
<protein>
    <recommendedName>
        <fullName>Homeobox protein Hox-C13</fullName>
    </recommendedName>
</protein>
<accession>P50207</accession>
<accession>Q53Z78</accession>
<accession>Q920I7</accession>
<feature type="chain" id="PRO_0000200198" description="Homeobox protein Hox-C13">
    <location>
        <begin position="1"/>
        <end position="328"/>
    </location>
</feature>
<feature type="DNA-binding region" description="Homeobox" evidence="1">
    <location>
        <begin position="258"/>
        <end position="317"/>
    </location>
</feature>
<feature type="region of interest" description="Disordered" evidence="2">
    <location>
        <begin position="23"/>
        <end position="48"/>
    </location>
</feature>
<feature type="compositionally biased region" description="Gly residues" evidence="2">
    <location>
        <begin position="27"/>
        <end position="45"/>
    </location>
</feature>
<name>HXC13_MOUSE</name>
<comment type="function">
    <text evidence="3 4">Transcription factor which plays a role in hair follicle differentiation. Regulates FOXQ1 expression and that of other hair-specific genes.</text>
</comment>
<comment type="subcellular location">
    <subcellularLocation>
        <location>Nucleus</location>
    </subcellularLocation>
</comment>
<comment type="tissue specificity">
    <text evidence="3 4">Expressed in differentiating keratinocytes. In the hair follicle lower matrix, expressed in all 3 hair shaft-forming compartments, i.e. cuticle, cortex and medulla. Expression stops sharply at the boundary with the germinal matrix compartment.</text>
</comment>
<comment type="similarity">
    <text evidence="5">Belongs to the Abd-B homeobox family.</text>
</comment>
<sequence>MTTSLLLHPRWPESLMYVYEDSAAESGSGGGGGGGGAGGAGGGCSGASPGKAPSMDGLGGSCPASHCRDLLPHPVLARPPAPLGAPQGAVYTDIPAPEAARQCAPPPAPPTSSSATLGYGYPFGGSYYGCRLSHNVNLQQKPCAYHPGDKYPEPSGALPGDDLSSRAKEFAFYPSFASSYQAMPGYLDVSVVPGISGHPEPRHDALIPVEGYQHWALSNGWDSQVYCSKEQSQSAHLWKSPFPDVVPLQPEVSSYRRGRKKRVPYTKVQLKELEKEYAASKFITKEKRRRISATTNLSERQVTIWFQNRRVKEKKVVSKSKAPHLHST</sequence>
<reference key="1">
    <citation type="journal article" date="2001" name="Development">
        <title>Overexpression of Hoxc13 in differentiating keratinocytes results in downregulation of a novel hair keratin gene cluster and alopecia.</title>
        <authorList>
            <person name="Tkatchenko A.V."/>
            <person name="Visconti R.P."/>
            <person name="Shang L."/>
            <person name="Papenbrock T."/>
            <person name="Pruett N.D."/>
            <person name="Ito T."/>
            <person name="Ogawa M."/>
            <person name="Awgulewitsch A."/>
        </authorList>
    </citation>
    <scope>NUCLEOTIDE SEQUENCE [MRNA]</scope>
    <scope>FUNCTION</scope>
    <scope>TISSUE SPECIFICITY</scope>
    <source>
        <strain>FVB/NJ</strain>
        <tissue>Embryo</tissue>
    </source>
</reference>
<reference key="2">
    <citation type="submission" date="2003-07" db="EMBL/GenBank/DDBJ databases">
        <title>Hoxc13 expression in mouse kidney development and reactivated expression during HIV-associated glomerulosclerosis.</title>
        <authorList>
            <person name="Bruggeman L.A."/>
        </authorList>
    </citation>
    <scope>NUCLEOTIDE SEQUENCE [MRNA]</scope>
    <source>
        <strain>FVB/N</strain>
    </source>
</reference>
<reference key="3">
    <citation type="journal article" date="1994" name="Genomics">
        <title>Identification of the murine Hox-c12 and Hox-c13 homeoboxes on yeast artificial chromosomes.</title>
        <authorList>
            <person name="Bradshaw M.S."/>
            <person name="Ruddle F.H."/>
        </authorList>
    </citation>
    <scope>NUCLEOTIDE SEQUENCE [GENOMIC DNA] OF 272-309</scope>
    <source>
        <strain>C57BL/6J</strain>
    </source>
</reference>
<reference key="4">
    <citation type="journal article" date="2006" name="J. Biol. Chem.">
        <title>Evidence that the satin hair mutant gene Foxq1 is among multiple and functionally diverse regulatory targets for Hoxc13 during hair follicle differentiation.</title>
        <authorList>
            <person name="Potter C.S."/>
            <person name="Peterson R.L."/>
            <person name="Barth J.L."/>
            <person name="Pruett N.D."/>
            <person name="Jacobs D.F."/>
            <person name="Kern M.J."/>
            <person name="Argraves W.S."/>
            <person name="Sundberg J.P."/>
            <person name="Awgulewitsch A."/>
        </authorList>
    </citation>
    <scope>FUNCTION</scope>
    <scope>TISSUE SPECIFICITY</scope>
</reference>
<gene>
    <name type="primary">Hoxc13</name>
    <name type="synonym">Hoxc-13</name>
</gene>
<dbReference type="EMBL" id="AF193796">
    <property type="protein sequence ID" value="AAL09298.1"/>
    <property type="molecule type" value="mRNA"/>
</dbReference>
<dbReference type="EMBL" id="AY349616">
    <property type="protein sequence ID" value="AAQ54690.1"/>
    <property type="molecule type" value="mRNA"/>
</dbReference>
<dbReference type="EMBL" id="U04838">
    <property type="protein sequence ID" value="AAA20229.1"/>
    <property type="molecule type" value="Genomic_DNA"/>
</dbReference>
<dbReference type="CCDS" id="CCDS27890.1"/>
<dbReference type="PIR" id="I48924">
    <property type="entry name" value="I48924"/>
</dbReference>
<dbReference type="RefSeq" id="NP_034594.1">
    <property type="nucleotide sequence ID" value="NM_010464.2"/>
</dbReference>
<dbReference type="SMR" id="P50207"/>
<dbReference type="BioGRID" id="200385">
    <property type="interactions" value="1"/>
</dbReference>
<dbReference type="FunCoup" id="P50207">
    <property type="interactions" value="1125"/>
</dbReference>
<dbReference type="IntAct" id="P50207">
    <property type="interactions" value="1"/>
</dbReference>
<dbReference type="STRING" id="10090.ENSMUSP00000001700"/>
<dbReference type="PhosphoSitePlus" id="P50207"/>
<dbReference type="PaxDb" id="10090-ENSMUSP00000001700"/>
<dbReference type="ProteomicsDB" id="266933"/>
<dbReference type="Antibodypedia" id="27302">
    <property type="antibodies" value="113 antibodies from 26 providers"/>
</dbReference>
<dbReference type="DNASU" id="15422"/>
<dbReference type="Ensembl" id="ENSMUST00000001700.7">
    <property type="protein sequence ID" value="ENSMUSP00000001700.7"/>
    <property type="gene ID" value="ENSMUSG00000001655.7"/>
</dbReference>
<dbReference type="GeneID" id="15422"/>
<dbReference type="KEGG" id="mmu:15422"/>
<dbReference type="UCSC" id="uc007xwv.1">
    <property type="organism name" value="mouse"/>
</dbReference>
<dbReference type="AGR" id="MGI:99560"/>
<dbReference type="CTD" id="3229"/>
<dbReference type="MGI" id="MGI:99560">
    <property type="gene designation" value="Hoxc13"/>
</dbReference>
<dbReference type="VEuPathDB" id="HostDB:ENSMUSG00000001655"/>
<dbReference type="eggNOG" id="KOG0487">
    <property type="taxonomic scope" value="Eukaryota"/>
</dbReference>
<dbReference type="GeneTree" id="ENSGT00940000161087"/>
<dbReference type="HOGENOM" id="CLU_059940_0_0_1"/>
<dbReference type="InParanoid" id="P50207"/>
<dbReference type="OMA" id="SNCPATH"/>
<dbReference type="OrthoDB" id="6159439at2759"/>
<dbReference type="PhylomeDB" id="P50207"/>
<dbReference type="TreeFam" id="TF330813"/>
<dbReference type="BioGRID-ORCS" id="15422">
    <property type="hits" value="3 hits in 79 CRISPR screens"/>
</dbReference>
<dbReference type="PRO" id="PR:P50207"/>
<dbReference type="Proteomes" id="UP000000589">
    <property type="component" value="Chromosome 15"/>
</dbReference>
<dbReference type="RNAct" id="P50207">
    <property type="molecule type" value="protein"/>
</dbReference>
<dbReference type="Bgee" id="ENSMUSG00000001655">
    <property type="expression patterns" value="Expressed in lip and 30 other cell types or tissues"/>
</dbReference>
<dbReference type="GO" id="GO:0005634">
    <property type="term" value="C:nucleus"/>
    <property type="evidence" value="ECO:0000314"/>
    <property type="project" value="MGI"/>
</dbReference>
<dbReference type="GO" id="GO:0003682">
    <property type="term" value="F:chromatin binding"/>
    <property type="evidence" value="ECO:0000314"/>
    <property type="project" value="MGI"/>
</dbReference>
<dbReference type="GO" id="GO:0001228">
    <property type="term" value="F:DNA-binding transcription activator activity, RNA polymerase II-specific"/>
    <property type="evidence" value="ECO:0000314"/>
    <property type="project" value="MGI"/>
</dbReference>
<dbReference type="GO" id="GO:0140297">
    <property type="term" value="F:DNA-binding transcription factor binding"/>
    <property type="evidence" value="ECO:0007669"/>
    <property type="project" value="Ensembl"/>
</dbReference>
<dbReference type="GO" id="GO:0000976">
    <property type="term" value="F:transcription cis-regulatory region binding"/>
    <property type="evidence" value="ECO:0007669"/>
    <property type="project" value="Ensembl"/>
</dbReference>
<dbReference type="GO" id="GO:0009653">
    <property type="term" value="P:anatomical structure morphogenesis"/>
    <property type="evidence" value="ECO:0000315"/>
    <property type="project" value="MGI"/>
</dbReference>
<dbReference type="GO" id="GO:0009952">
    <property type="term" value="P:anterior/posterior pattern specification"/>
    <property type="evidence" value="ECO:0000315"/>
    <property type="project" value="MGI"/>
</dbReference>
<dbReference type="GO" id="GO:0001942">
    <property type="term" value="P:hair follicle development"/>
    <property type="evidence" value="ECO:0000315"/>
    <property type="project" value="MGI"/>
</dbReference>
<dbReference type="GO" id="GO:0035878">
    <property type="term" value="P:nail development"/>
    <property type="evidence" value="ECO:0000315"/>
    <property type="project" value="MGI"/>
</dbReference>
<dbReference type="GO" id="GO:0045944">
    <property type="term" value="P:positive regulation of transcription by RNA polymerase II"/>
    <property type="evidence" value="ECO:0000314"/>
    <property type="project" value="MGI"/>
</dbReference>
<dbReference type="GO" id="GO:0043587">
    <property type="term" value="P:tongue morphogenesis"/>
    <property type="evidence" value="ECO:0000315"/>
    <property type="project" value="MGI"/>
</dbReference>
<dbReference type="CDD" id="cd00086">
    <property type="entry name" value="homeodomain"/>
    <property type="match status" value="1"/>
</dbReference>
<dbReference type="FunFam" id="1.10.10.60:FF:000130">
    <property type="entry name" value="Homeobox protein Hox-D12"/>
    <property type="match status" value="1"/>
</dbReference>
<dbReference type="Gene3D" id="1.10.10.60">
    <property type="entry name" value="Homeodomain-like"/>
    <property type="match status" value="1"/>
</dbReference>
<dbReference type="InterPro" id="IPR051003">
    <property type="entry name" value="AP_axis_regulatory_Homeobox"/>
</dbReference>
<dbReference type="InterPro" id="IPR001356">
    <property type="entry name" value="HD"/>
</dbReference>
<dbReference type="InterPro" id="IPR017970">
    <property type="entry name" value="Homeobox_CS"/>
</dbReference>
<dbReference type="InterPro" id="IPR009057">
    <property type="entry name" value="Homeodomain-like_sf"/>
</dbReference>
<dbReference type="InterPro" id="IPR022067">
    <property type="entry name" value="HoxA13_N"/>
</dbReference>
<dbReference type="PANTHER" id="PTHR45804:SF5">
    <property type="entry name" value="HOMEOBOX PROTEIN HOX-C13"/>
    <property type="match status" value="1"/>
</dbReference>
<dbReference type="PANTHER" id="PTHR45804">
    <property type="entry name" value="SEGMENTATION PROTEIN FUSHI TARAZU-LIKE PROTEIN"/>
    <property type="match status" value="1"/>
</dbReference>
<dbReference type="Pfam" id="PF00046">
    <property type="entry name" value="Homeodomain"/>
    <property type="match status" value="1"/>
</dbReference>
<dbReference type="Pfam" id="PF12284">
    <property type="entry name" value="HoxA13_N"/>
    <property type="match status" value="1"/>
</dbReference>
<dbReference type="SMART" id="SM00389">
    <property type="entry name" value="HOX"/>
    <property type="match status" value="1"/>
</dbReference>
<dbReference type="SUPFAM" id="SSF46689">
    <property type="entry name" value="Homeodomain-like"/>
    <property type="match status" value="1"/>
</dbReference>
<dbReference type="PROSITE" id="PS00027">
    <property type="entry name" value="HOMEOBOX_1"/>
    <property type="match status" value="1"/>
</dbReference>
<dbReference type="PROSITE" id="PS50071">
    <property type="entry name" value="HOMEOBOX_2"/>
    <property type="match status" value="1"/>
</dbReference>